<accession>P56257</accession>
<accession>Q2MCC7</accession>
<sequence length="75" mass="8767">MQAAPQREETEWRVQSKRGLMPAYRGEAGQQVNIKIMEYSERNVRQLASNEQEEYIPRKINVGVINTPTLIRSDY</sequence>
<keyword id="KW-1185">Reference proteome</keyword>
<gene>
    <name type="primary">ykgL</name>
    <name type="ordered locus">b0295</name>
    <name type="ordered locus">JW5033</name>
</gene>
<feature type="chain" id="PRO_0000168572" description="Uncharacterized protein YkgL">
    <location>
        <begin position="1"/>
        <end position="75"/>
    </location>
</feature>
<organism>
    <name type="scientific">Escherichia coli (strain K12)</name>
    <dbReference type="NCBI Taxonomy" id="83333"/>
    <lineage>
        <taxon>Bacteria</taxon>
        <taxon>Pseudomonadati</taxon>
        <taxon>Pseudomonadota</taxon>
        <taxon>Gammaproteobacteria</taxon>
        <taxon>Enterobacterales</taxon>
        <taxon>Enterobacteriaceae</taxon>
        <taxon>Escherichia</taxon>
    </lineage>
</organism>
<dbReference type="EMBL" id="U00096">
    <property type="protein sequence ID" value="AAC73398.1"/>
    <property type="molecule type" value="Genomic_DNA"/>
</dbReference>
<dbReference type="EMBL" id="AP009048">
    <property type="protein sequence ID" value="BAE76079.1"/>
    <property type="molecule type" value="Genomic_DNA"/>
</dbReference>
<dbReference type="PIR" id="G64755">
    <property type="entry name" value="G64755"/>
</dbReference>
<dbReference type="RefSeq" id="NP_414829.1">
    <property type="nucleotide sequence ID" value="NC_000913.3"/>
</dbReference>
<dbReference type="RefSeq" id="WP_001147279.1">
    <property type="nucleotide sequence ID" value="NZ_STEB01000020.1"/>
</dbReference>
<dbReference type="BioGRID" id="4259794">
    <property type="interactions" value="26"/>
</dbReference>
<dbReference type="FunCoup" id="P56257">
    <property type="interactions" value="1"/>
</dbReference>
<dbReference type="STRING" id="511145.b0295"/>
<dbReference type="PaxDb" id="511145-b0295"/>
<dbReference type="EnsemblBacteria" id="AAC73398">
    <property type="protein sequence ID" value="AAC73398"/>
    <property type="gene ID" value="b0295"/>
</dbReference>
<dbReference type="GeneID" id="944962"/>
<dbReference type="KEGG" id="ecj:JW5033"/>
<dbReference type="KEGG" id="eco:b0295"/>
<dbReference type="KEGG" id="ecoc:C3026_01440"/>
<dbReference type="KEGG" id="ecoc:C3026_24070"/>
<dbReference type="PATRIC" id="fig|83333.103.peg.1052"/>
<dbReference type="EchoBASE" id="EB4071"/>
<dbReference type="HOGENOM" id="CLU_2665277_0_0_6"/>
<dbReference type="InParanoid" id="P56257"/>
<dbReference type="BioCyc" id="EcoCyc:G6166-MONOMER"/>
<dbReference type="PRO" id="PR:P56257"/>
<dbReference type="Proteomes" id="UP000000625">
    <property type="component" value="Chromosome"/>
</dbReference>
<proteinExistence type="predicted"/>
<name>YKGL_ECOLI</name>
<reference key="1">
    <citation type="journal article" date="1997" name="Science">
        <title>The complete genome sequence of Escherichia coli K-12.</title>
        <authorList>
            <person name="Blattner F.R."/>
            <person name="Plunkett G. III"/>
            <person name="Bloch C.A."/>
            <person name="Perna N.T."/>
            <person name="Burland V."/>
            <person name="Riley M."/>
            <person name="Collado-Vides J."/>
            <person name="Glasner J.D."/>
            <person name="Rode C.K."/>
            <person name="Mayhew G.F."/>
            <person name="Gregor J."/>
            <person name="Davis N.W."/>
            <person name="Kirkpatrick H.A."/>
            <person name="Goeden M.A."/>
            <person name="Rose D.J."/>
            <person name="Mau B."/>
            <person name="Shao Y."/>
        </authorList>
    </citation>
    <scope>NUCLEOTIDE SEQUENCE [LARGE SCALE GENOMIC DNA]</scope>
    <source>
        <strain>K12 / MG1655 / ATCC 47076</strain>
    </source>
</reference>
<reference key="2">
    <citation type="journal article" date="2006" name="Mol. Syst. Biol.">
        <title>Highly accurate genome sequences of Escherichia coli K-12 strains MG1655 and W3110.</title>
        <authorList>
            <person name="Hayashi K."/>
            <person name="Morooka N."/>
            <person name="Yamamoto Y."/>
            <person name="Fujita K."/>
            <person name="Isono K."/>
            <person name="Choi S."/>
            <person name="Ohtsubo E."/>
            <person name="Baba T."/>
            <person name="Wanner B.L."/>
            <person name="Mori H."/>
            <person name="Horiuchi T."/>
        </authorList>
    </citation>
    <scope>NUCLEOTIDE SEQUENCE [LARGE SCALE GENOMIC DNA]</scope>
    <source>
        <strain>K12 / W3110 / ATCC 27325 / DSM 5911</strain>
    </source>
</reference>
<protein>
    <recommendedName>
        <fullName>Uncharacterized protein YkgL</fullName>
    </recommendedName>
</protein>